<accession>Q1RK83</accession>
<dbReference type="EMBL" id="CP000087">
    <property type="protein sequence ID" value="ABE04231.1"/>
    <property type="molecule type" value="Genomic_DNA"/>
</dbReference>
<dbReference type="RefSeq" id="WP_011476846.1">
    <property type="nucleotide sequence ID" value="NC_007940.1"/>
</dbReference>
<dbReference type="SMR" id="Q1RK83"/>
<dbReference type="KEGG" id="rbe:RBE_0150"/>
<dbReference type="eggNOG" id="COG0666">
    <property type="taxonomic scope" value="Bacteria"/>
</dbReference>
<dbReference type="HOGENOM" id="CLU_1487971_0_0_5"/>
<dbReference type="OrthoDB" id="7872474at2"/>
<dbReference type="Proteomes" id="UP000001951">
    <property type="component" value="Chromosome"/>
</dbReference>
<dbReference type="Gene3D" id="1.25.40.20">
    <property type="entry name" value="Ankyrin repeat-containing domain"/>
    <property type="match status" value="1"/>
</dbReference>
<dbReference type="InterPro" id="IPR002110">
    <property type="entry name" value="Ankyrin_rpt"/>
</dbReference>
<dbReference type="InterPro" id="IPR036770">
    <property type="entry name" value="Ankyrin_rpt-contain_sf"/>
</dbReference>
<dbReference type="PANTHER" id="PTHR24171:SF9">
    <property type="entry name" value="ANKYRIN REPEAT DOMAIN-CONTAINING PROTEIN 39"/>
    <property type="match status" value="1"/>
</dbReference>
<dbReference type="PANTHER" id="PTHR24171">
    <property type="entry name" value="ANKYRIN REPEAT DOMAIN-CONTAINING PROTEIN 39-RELATED"/>
    <property type="match status" value="1"/>
</dbReference>
<dbReference type="Pfam" id="PF12796">
    <property type="entry name" value="Ank_2"/>
    <property type="match status" value="1"/>
</dbReference>
<dbReference type="SMART" id="SM00248">
    <property type="entry name" value="ANK"/>
    <property type="match status" value="4"/>
</dbReference>
<dbReference type="SUPFAM" id="SSF48403">
    <property type="entry name" value="Ankyrin repeat"/>
    <property type="match status" value="1"/>
</dbReference>
<dbReference type="PROSITE" id="PS50297">
    <property type="entry name" value="ANK_REP_REGION"/>
    <property type="match status" value="1"/>
</dbReference>
<organism>
    <name type="scientific">Rickettsia bellii (strain RML369-C)</name>
    <dbReference type="NCBI Taxonomy" id="336407"/>
    <lineage>
        <taxon>Bacteria</taxon>
        <taxon>Pseudomonadati</taxon>
        <taxon>Pseudomonadota</taxon>
        <taxon>Alphaproteobacteria</taxon>
        <taxon>Rickettsiales</taxon>
        <taxon>Rickettsiaceae</taxon>
        <taxon>Rickettsieae</taxon>
        <taxon>Rickettsia</taxon>
        <taxon>belli group</taxon>
    </lineage>
</organism>
<keyword id="KW-0040">ANK repeat</keyword>
<keyword id="KW-0677">Repeat</keyword>
<gene>
    <name type="ordered locus">RBE_0150</name>
</gene>
<feature type="chain" id="PRO_0000280903" description="Putative ankyrin repeat protein RBE_0150">
    <location>
        <begin position="1"/>
        <end position="181"/>
    </location>
</feature>
<feature type="repeat" description="ANK 1">
    <location>
        <begin position="50"/>
        <end position="79"/>
    </location>
</feature>
<feature type="repeat" description="ANK 2">
    <location>
        <begin position="83"/>
        <end position="114"/>
    </location>
</feature>
<feature type="repeat" description="ANK 3">
    <location>
        <begin position="118"/>
        <end position="147"/>
    </location>
</feature>
<feature type="repeat" description="ANK 4">
    <location>
        <begin position="151"/>
        <end position="180"/>
    </location>
</feature>
<reference key="1">
    <citation type="journal article" date="2006" name="PLoS Genet.">
        <title>Genome sequence of Rickettsia bellii illuminates the role of amoebae in gene exchanges between intracellular pathogens.</title>
        <authorList>
            <person name="Ogata H."/>
            <person name="La Scola B."/>
            <person name="Audic S."/>
            <person name="Renesto P."/>
            <person name="Blanc G."/>
            <person name="Robert C."/>
            <person name="Fournier P.-E."/>
            <person name="Claverie J.-M."/>
            <person name="Raoult D."/>
        </authorList>
    </citation>
    <scope>NUCLEOTIDE SEQUENCE [LARGE SCALE GENOMIC DNA]</scope>
    <source>
        <strain>RML369-C</strain>
    </source>
</reference>
<name>Y150_RICBR</name>
<sequence length="181" mass="20134">MIEYLTNKFLNSKQTLLEKIVQIHDKKINITKLAKTLIEKSDCTKIDNTIGQKLLIKATYANDLDLVKALHDKGVKLGTKDLLGRTSLHHAIKAGAGKDLIEFLIDNAGIDINACDKSGSTLMHWAVNSHHIPAIKLLQTKKADYFTPDYLGQTPLKLAEYYGHDDVIELLAENSSAGYYV</sequence>
<protein>
    <recommendedName>
        <fullName>Putative ankyrin repeat protein RBE_0150</fullName>
    </recommendedName>
</protein>
<proteinExistence type="predicted"/>